<accession>C1CF29</accession>
<feature type="chain" id="PRO_1000133386" description="GMP synthase [glutamine-hydrolyzing]">
    <location>
        <begin position="1"/>
        <end position="520"/>
    </location>
</feature>
<feature type="domain" description="Glutamine amidotransferase type-1" evidence="1">
    <location>
        <begin position="13"/>
        <end position="205"/>
    </location>
</feature>
<feature type="domain" description="GMPS ATP-PPase" evidence="1">
    <location>
        <begin position="206"/>
        <end position="395"/>
    </location>
</feature>
<feature type="active site" description="Nucleophile" evidence="1">
    <location>
        <position position="90"/>
    </location>
</feature>
<feature type="active site" evidence="1">
    <location>
        <position position="179"/>
    </location>
</feature>
<feature type="active site" evidence="1">
    <location>
        <position position="181"/>
    </location>
</feature>
<feature type="binding site" evidence="1">
    <location>
        <begin position="233"/>
        <end position="239"/>
    </location>
    <ligand>
        <name>ATP</name>
        <dbReference type="ChEBI" id="CHEBI:30616"/>
    </ligand>
</feature>
<organism>
    <name type="scientific">Streptococcus pneumoniae (strain JJA)</name>
    <dbReference type="NCBI Taxonomy" id="488222"/>
    <lineage>
        <taxon>Bacteria</taxon>
        <taxon>Bacillati</taxon>
        <taxon>Bacillota</taxon>
        <taxon>Bacilli</taxon>
        <taxon>Lactobacillales</taxon>
        <taxon>Streptococcaceae</taxon>
        <taxon>Streptococcus</taxon>
    </lineage>
</organism>
<comment type="function">
    <text evidence="1">Catalyzes the synthesis of GMP from XMP.</text>
</comment>
<comment type="catalytic activity">
    <reaction evidence="1">
        <text>XMP + L-glutamine + ATP + H2O = GMP + L-glutamate + AMP + diphosphate + 2 H(+)</text>
        <dbReference type="Rhea" id="RHEA:11680"/>
        <dbReference type="ChEBI" id="CHEBI:15377"/>
        <dbReference type="ChEBI" id="CHEBI:15378"/>
        <dbReference type="ChEBI" id="CHEBI:29985"/>
        <dbReference type="ChEBI" id="CHEBI:30616"/>
        <dbReference type="ChEBI" id="CHEBI:33019"/>
        <dbReference type="ChEBI" id="CHEBI:57464"/>
        <dbReference type="ChEBI" id="CHEBI:58115"/>
        <dbReference type="ChEBI" id="CHEBI:58359"/>
        <dbReference type="ChEBI" id="CHEBI:456215"/>
        <dbReference type="EC" id="6.3.5.2"/>
    </reaction>
</comment>
<comment type="pathway">
    <text evidence="1">Purine metabolism; GMP biosynthesis; GMP from XMP (L-Gln route): step 1/1.</text>
</comment>
<comment type="subunit">
    <text evidence="1">Homodimer.</text>
</comment>
<evidence type="ECO:0000255" key="1">
    <source>
        <dbReference type="HAMAP-Rule" id="MF_00344"/>
    </source>
</evidence>
<reference key="1">
    <citation type="journal article" date="2010" name="Genome Biol.">
        <title>Structure and dynamics of the pan-genome of Streptococcus pneumoniae and closely related species.</title>
        <authorList>
            <person name="Donati C."/>
            <person name="Hiller N.L."/>
            <person name="Tettelin H."/>
            <person name="Muzzi A."/>
            <person name="Croucher N.J."/>
            <person name="Angiuoli S.V."/>
            <person name="Oggioni M."/>
            <person name="Dunning Hotopp J.C."/>
            <person name="Hu F.Z."/>
            <person name="Riley D.R."/>
            <person name="Covacci A."/>
            <person name="Mitchell T.J."/>
            <person name="Bentley S.D."/>
            <person name="Kilian M."/>
            <person name="Ehrlich G.D."/>
            <person name="Rappuoli R."/>
            <person name="Moxon E.R."/>
            <person name="Masignani V."/>
        </authorList>
    </citation>
    <scope>NUCLEOTIDE SEQUENCE [LARGE SCALE GENOMIC DNA]</scope>
    <source>
        <strain>JJA</strain>
    </source>
</reference>
<dbReference type="EC" id="6.3.5.2" evidence="1"/>
<dbReference type="EMBL" id="CP000919">
    <property type="protein sequence ID" value="ACO19841.1"/>
    <property type="molecule type" value="Genomic_DNA"/>
</dbReference>
<dbReference type="RefSeq" id="WP_000065720.1">
    <property type="nucleotide sequence ID" value="NC_012466.1"/>
</dbReference>
<dbReference type="SMR" id="C1CF29"/>
<dbReference type="MEROPS" id="C26.957"/>
<dbReference type="KEGG" id="sjj:SPJ_1344"/>
<dbReference type="HOGENOM" id="CLU_014340_0_5_9"/>
<dbReference type="UniPathway" id="UPA00189">
    <property type="reaction ID" value="UER00296"/>
</dbReference>
<dbReference type="Proteomes" id="UP000002206">
    <property type="component" value="Chromosome"/>
</dbReference>
<dbReference type="GO" id="GO:0005829">
    <property type="term" value="C:cytosol"/>
    <property type="evidence" value="ECO:0007669"/>
    <property type="project" value="TreeGrafter"/>
</dbReference>
<dbReference type="GO" id="GO:0005524">
    <property type="term" value="F:ATP binding"/>
    <property type="evidence" value="ECO:0007669"/>
    <property type="project" value="UniProtKB-UniRule"/>
</dbReference>
<dbReference type="GO" id="GO:0003921">
    <property type="term" value="F:GMP synthase activity"/>
    <property type="evidence" value="ECO:0007669"/>
    <property type="project" value="InterPro"/>
</dbReference>
<dbReference type="CDD" id="cd01742">
    <property type="entry name" value="GATase1_GMP_Synthase"/>
    <property type="match status" value="1"/>
</dbReference>
<dbReference type="CDD" id="cd01997">
    <property type="entry name" value="GMP_synthase_C"/>
    <property type="match status" value="1"/>
</dbReference>
<dbReference type="FunFam" id="3.30.300.10:FF:000002">
    <property type="entry name" value="GMP synthase [glutamine-hydrolyzing]"/>
    <property type="match status" value="1"/>
</dbReference>
<dbReference type="FunFam" id="3.40.50.620:FF:000001">
    <property type="entry name" value="GMP synthase [glutamine-hydrolyzing]"/>
    <property type="match status" value="1"/>
</dbReference>
<dbReference type="FunFam" id="3.40.50.880:FF:000001">
    <property type="entry name" value="GMP synthase [glutamine-hydrolyzing]"/>
    <property type="match status" value="1"/>
</dbReference>
<dbReference type="Gene3D" id="3.30.300.10">
    <property type="match status" value="1"/>
</dbReference>
<dbReference type="Gene3D" id="3.40.50.880">
    <property type="match status" value="1"/>
</dbReference>
<dbReference type="Gene3D" id="3.40.50.620">
    <property type="entry name" value="HUPs"/>
    <property type="match status" value="1"/>
</dbReference>
<dbReference type="HAMAP" id="MF_00344">
    <property type="entry name" value="GMP_synthase"/>
    <property type="match status" value="1"/>
</dbReference>
<dbReference type="InterPro" id="IPR029062">
    <property type="entry name" value="Class_I_gatase-like"/>
</dbReference>
<dbReference type="InterPro" id="IPR017926">
    <property type="entry name" value="GATASE"/>
</dbReference>
<dbReference type="InterPro" id="IPR001674">
    <property type="entry name" value="GMP_synth_C"/>
</dbReference>
<dbReference type="InterPro" id="IPR004739">
    <property type="entry name" value="GMP_synth_GATase"/>
</dbReference>
<dbReference type="InterPro" id="IPR022955">
    <property type="entry name" value="GMP_synthase"/>
</dbReference>
<dbReference type="InterPro" id="IPR025777">
    <property type="entry name" value="GMPS_ATP_PPase_dom"/>
</dbReference>
<dbReference type="InterPro" id="IPR022310">
    <property type="entry name" value="NAD/GMP_synthase"/>
</dbReference>
<dbReference type="InterPro" id="IPR014729">
    <property type="entry name" value="Rossmann-like_a/b/a_fold"/>
</dbReference>
<dbReference type="NCBIfam" id="TIGR00884">
    <property type="entry name" value="guaA_Cterm"/>
    <property type="match status" value="1"/>
</dbReference>
<dbReference type="NCBIfam" id="TIGR00888">
    <property type="entry name" value="guaA_Nterm"/>
    <property type="match status" value="1"/>
</dbReference>
<dbReference type="NCBIfam" id="NF000848">
    <property type="entry name" value="PRK00074.1"/>
    <property type="match status" value="1"/>
</dbReference>
<dbReference type="PANTHER" id="PTHR11922:SF2">
    <property type="entry name" value="GMP SYNTHASE [GLUTAMINE-HYDROLYZING]"/>
    <property type="match status" value="1"/>
</dbReference>
<dbReference type="PANTHER" id="PTHR11922">
    <property type="entry name" value="GMP SYNTHASE-RELATED"/>
    <property type="match status" value="1"/>
</dbReference>
<dbReference type="Pfam" id="PF00117">
    <property type="entry name" value="GATase"/>
    <property type="match status" value="1"/>
</dbReference>
<dbReference type="Pfam" id="PF00958">
    <property type="entry name" value="GMP_synt_C"/>
    <property type="match status" value="1"/>
</dbReference>
<dbReference type="Pfam" id="PF02540">
    <property type="entry name" value="NAD_synthase"/>
    <property type="match status" value="1"/>
</dbReference>
<dbReference type="PRINTS" id="PR00097">
    <property type="entry name" value="ANTSNTHASEII"/>
</dbReference>
<dbReference type="PRINTS" id="PR00099">
    <property type="entry name" value="CPSGATASE"/>
</dbReference>
<dbReference type="PRINTS" id="PR00096">
    <property type="entry name" value="GATASE"/>
</dbReference>
<dbReference type="SUPFAM" id="SSF52402">
    <property type="entry name" value="Adenine nucleotide alpha hydrolases-like"/>
    <property type="match status" value="1"/>
</dbReference>
<dbReference type="SUPFAM" id="SSF52317">
    <property type="entry name" value="Class I glutamine amidotransferase-like"/>
    <property type="match status" value="1"/>
</dbReference>
<dbReference type="PROSITE" id="PS51273">
    <property type="entry name" value="GATASE_TYPE_1"/>
    <property type="match status" value="1"/>
</dbReference>
<dbReference type="PROSITE" id="PS51553">
    <property type="entry name" value="GMPS_ATP_PPASE"/>
    <property type="match status" value="1"/>
</dbReference>
<gene>
    <name evidence="1" type="primary">guaA</name>
    <name type="ordered locus">SPJ_1344</name>
</gene>
<name>GUAA_STRZJ</name>
<keyword id="KW-0067">ATP-binding</keyword>
<keyword id="KW-0315">Glutamine amidotransferase</keyword>
<keyword id="KW-0332">GMP biosynthesis</keyword>
<keyword id="KW-0436">Ligase</keyword>
<keyword id="KW-0547">Nucleotide-binding</keyword>
<keyword id="KW-0658">Purine biosynthesis</keyword>
<protein>
    <recommendedName>
        <fullName evidence="1">GMP synthase [glutamine-hydrolyzing]</fullName>
        <ecNumber evidence="1">6.3.5.2</ecNumber>
    </recommendedName>
    <alternativeName>
        <fullName evidence="1">GMP synthetase</fullName>
    </alternativeName>
    <alternativeName>
        <fullName evidence="1">Glutamine amidotransferase</fullName>
    </alternativeName>
</protein>
<sequence>MSNISTDLQDVEKIIVLDYGSQYNQLISRRIREIGVFSELKSHKISAAEVREVNPVGIILSGGPNSVYEDGSFDIDPEIFELGIPILGICYGMQLLTHKLGGKVVPAGDAGNREYGQSTLTHTPSALFESTPDEQTVLMSHGDAVTEIPADFVRTGTSADCLYAAIENPDKHIYGIQFHPEVRHSVYGNDILRNFALNICKAKGDWSMDNFIDMQIKKIRETVGDKRVLLGLSGGVDSSVVGVLLQKAIGDQLICIFVDHGLLRKGEADQVMDMLGGKFGLNIVKADAAKRFLDKLAGVSDPEQKRKIIGNEFVYVFDDEASKLKDVKFLAQGTLYTDVIESGTDTAQTIKSHHNVGGLPEDMQFELIEPLNTLYKDEVRALGTELGMPDHIVWRQPFPGPGLAIRVMGEITEEKLETVRESDAILREEIAKAGLDRDIWQYFTVNTGVRSVGVMGDGRTYDYTIAIRAITSIDGMTADFAKIPWEVLQKISVRIVNEVDHVNRIVYDITSKPPATVEWE</sequence>
<proteinExistence type="inferred from homology"/>